<feature type="chain" id="PRO_1000022243" description="Potassium-transporting ATPase potassium-binding subunit">
    <location>
        <begin position="1"/>
        <end position="559"/>
    </location>
</feature>
<feature type="transmembrane region" description="Helical" evidence="1">
    <location>
        <begin position="5"/>
        <end position="25"/>
    </location>
</feature>
<feature type="transmembrane region" description="Helical" evidence="1">
    <location>
        <begin position="27"/>
        <end position="47"/>
    </location>
</feature>
<feature type="transmembrane region" description="Helical" evidence="1">
    <location>
        <begin position="63"/>
        <end position="83"/>
    </location>
</feature>
<feature type="transmembrane region" description="Helical" evidence="1">
    <location>
        <begin position="132"/>
        <end position="152"/>
    </location>
</feature>
<feature type="transmembrane region" description="Helical" evidence="1">
    <location>
        <begin position="170"/>
        <end position="190"/>
    </location>
</feature>
<feature type="transmembrane region" description="Helical" evidence="1">
    <location>
        <begin position="253"/>
        <end position="273"/>
    </location>
</feature>
<feature type="transmembrane region" description="Helical" evidence="1">
    <location>
        <begin position="283"/>
        <end position="303"/>
    </location>
</feature>
<feature type="transmembrane region" description="Helical" evidence="1">
    <location>
        <begin position="327"/>
        <end position="347"/>
    </location>
</feature>
<feature type="transmembrane region" description="Helical" evidence="1">
    <location>
        <begin position="356"/>
        <end position="376"/>
    </location>
</feature>
<feature type="transmembrane region" description="Helical" evidence="1">
    <location>
        <begin position="379"/>
        <end position="399"/>
    </location>
</feature>
<feature type="transmembrane region" description="Helical" evidence="1">
    <location>
        <begin position="416"/>
        <end position="436"/>
    </location>
</feature>
<feature type="transmembrane region" description="Helical" evidence="1">
    <location>
        <begin position="484"/>
        <end position="504"/>
    </location>
</feature>
<feature type="transmembrane region" description="Helical" evidence="1">
    <location>
        <begin position="524"/>
        <end position="544"/>
    </location>
</feature>
<dbReference type="EMBL" id="AE017220">
    <property type="protein sequence ID" value="AAX64632.1"/>
    <property type="molecule type" value="Genomic_DNA"/>
</dbReference>
<dbReference type="RefSeq" id="WP_001539481.1">
    <property type="nucleotide sequence ID" value="NC_006905.1"/>
</dbReference>
<dbReference type="SMR" id="Q57RM9"/>
<dbReference type="KEGG" id="sec:SCH_0726"/>
<dbReference type="HOGENOM" id="CLU_018614_3_0_6"/>
<dbReference type="Proteomes" id="UP000000538">
    <property type="component" value="Chromosome"/>
</dbReference>
<dbReference type="GO" id="GO:0005886">
    <property type="term" value="C:plasma membrane"/>
    <property type="evidence" value="ECO:0007669"/>
    <property type="project" value="UniProtKB-SubCell"/>
</dbReference>
<dbReference type="GO" id="GO:0008556">
    <property type="term" value="F:P-type potassium transmembrane transporter activity"/>
    <property type="evidence" value="ECO:0007669"/>
    <property type="project" value="InterPro"/>
</dbReference>
<dbReference type="GO" id="GO:0030955">
    <property type="term" value="F:potassium ion binding"/>
    <property type="evidence" value="ECO:0007669"/>
    <property type="project" value="UniProtKB-UniRule"/>
</dbReference>
<dbReference type="HAMAP" id="MF_00275">
    <property type="entry name" value="KdpA"/>
    <property type="match status" value="1"/>
</dbReference>
<dbReference type="InterPro" id="IPR004623">
    <property type="entry name" value="KdpA"/>
</dbReference>
<dbReference type="NCBIfam" id="TIGR00680">
    <property type="entry name" value="kdpA"/>
    <property type="match status" value="1"/>
</dbReference>
<dbReference type="PANTHER" id="PTHR30607">
    <property type="entry name" value="POTASSIUM-TRANSPORTING ATPASE A CHAIN"/>
    <property type="match status" value="1"/>
</dbReference>
<dbReference type="PANTHER" id="PTHR30607:SF2">
    <property type="entry name" value="POTASSIUM-TRANSPORTING ATPASE POTASSIUM-BINDING SUBUNIT"/>
    <property type="match status" value="1"/>
</dbReference>
<dbReference type="Pfam" id="PF03814">
    <property type="entry name" value="KdpA"/>
    <property type="match status" value="1"/>
</dbReference>
<dbReference type="PIRSF" id="PIRSF001294">
    <property type="entry name" value="K_ATPaseA"/>
    <property type="match status" value="1"/>
</dbReference>
<organism>
    <name type="scientific">Salmonella choleraesuis (strain SC-B67)</name>
    <dbReference type="NCBI Taxonomy" id="321314"/>
    <lineage>
        <taxon>Bacteria</taxon>
        <taxon>Pseudomonadati</taxon>
        <taxon>Pseudomonadota</taxon>
        <taxon>Gammaproteobacteria</taxon>
        <taxon>Enterobacterales</taxon>
        <taxon>Enterobacteriaceae</taxon>
        <taxon>Salmonella</taxon>
    </lineage>
</organism>
<evidence type="ECO:0000255" key="1">
    <source>
        <dbReference type="HAMAP-Rule" id="MF_00275"/>
    </source>
</evidence>
<sequence>MAAQGFLLIASFLLILLVLAKPLGSGLARLIAAVPLPGVAGVERILWRTLGITDHEMNWRQYLLALLTLNLLGLGILFCLLFWQEWLPLNPQRLPGLSWDLALNTAVSFVTNTNWQAYSGESTLSHFSQMAGLTVQNFLSAATGIAVVFALIRAFTRQNVHTLGNAWQDLVRITLWILFPVALIIALFFIQQGVPQNLSAYQPITTLEGAKQLLPMGPVASQEAIKMLGTNGGGFFNANSSHPFENPTALTNLAQMLAIFLIPAALCFAFGEAAGDRRQGRALLWAMSFIFVVCVAVVMWAEVQGNPHLLAAGADSSVNMEGKETRFGVLASSLFAVVTTAASCGAVNAMHDSFTALGGMVPMWLMQIGEVVFGGVGSGLYGMLLFVLLAVFIAGLMIGRTPEYLGKKIDVREMKMTALAILVTPMLVLLGSALAMMTDAGRSAMLNPGPHGFSEVLYAVSSAANNNGSAFAGLSANSPFWNCLLAFCMFVGRFGVIIPVMAIAGSLVSKKVQPASQGTLATHGALFIGLLIGTVLLVGALTFIPALALGPVAEHFSLP</sequence>
<keyword id="KW-0997">Cell inner membrane</keyword>
<keyword id="KW-1003">Cell membrane</keyword>
<keyword id="KW-0406">Ion transport</keyword>
<keyword id="KW-0472">Membrane</keyword>
<keyword id="KW-0630">Potassium</keyword>
<keyword id="KW-0633">Potassium transport</keyword>
<keyword id="KW-0812">Transmembrane</keyword>
<keyword id="KW-1133">Transmembrane helix</keyword>
<keyword id="KW-0813">Transport</keyword>
<proteinExistence type="inferred from homology"/>
<gene>
    <name evidence="1" type="primary">kdpA</name>
    <name type="ordered locus">SCH_0726</name>
</gene>
<accession>Q57RM9</accession>
<protein>
    <recommendedName>
        <fullName evidence="1">Potassium-transporting ATPase potassium-binding subunit</fullName>
    </recommendedName>
    <alternativeName>
        <fullName evidence="1">ATP phosphohydrolase [potassium-transporting] A chain</fullName>
    </alternativeName>
    <alternativeName>
        <fullName evidence="1">Potassium-binding and translocating subunit A</fullName>
    </alternativeName>
    <alternativeName>
        <fullName evidence="1">Potassium-translocating ATPase A chain</fullName>
    </alternativeName>
</protein>
<name>KDPA_SALCH</name>
<reference key="1">
    <citation type="journal article" date="2005" name="Nucleic Acids Res.">
        <title>The genome sequence of Salmonella enterica serovar Choleraesuis, a highly invasive and resistant zoonotic pathogen.</title>
        <authorList>
            <person name="Chiu C.-H."/>
            <person name="Tang P."/>
            <person name="Chu C."/>
            <person name="Hu S."/>
            <person name="Bao Q."/>
            <person name="Yu J."/>
            <person name="Chou Y.-Y."/>
            <person name="Wang H.-S."/>
            <person name="Lee Y.-S."/>
        </authorList>
    </citation>
    <scope>NUCLEOTIDE SEQUENCE [LARGE SCALE GENOMIC DNA]</scope>
    <source>
        <strain>SC-B67</strain>
    </source>
</reference>
<comment type="function">
    <text evidence="1">Part of the high-affinity ATP-driven potassium transport (or Kdp) system, which catalyzes the hydrolysis of ATP coupled with the electrogenic transport of potassium into the cytoplasm. This subunit binds the periplasmic potassium ions and delivers the ions to the membrane domain of KdpB through an intramembrane tunnel.</text>
</comment>
<comment type="subunit">
    <text evidence="1">The system is composed of three essential subunits: KdpA, KdpB and KdpC.</text>
</comment>
<comment type="subcellular location">
    <subcellularLocation>
        <location evidence="1">Cell inner membrane</location>
        <topology evidence="1">Multi-pass membrane protein</topology>
    </subcellularLocation>
</comment>
<comment type="similarity">
    <text evidence="1">Belongs to the KdpA family.</text>
</comment>